<organism>
    <name type="scientific">Cytophaga hutchinsonii (strain ATCC 33406 / DSM 1761 / CIP 103989 / NBRC 15051 / NCIMB 9469 / D465)</name>
    <dbReference type="NCBI Taxonomy" id="269798"/>
    <lineage>
        <taxon>Bacteria</taxon>
        <taxon>Pseudomonadati</taxon>
        <taxon>Bacteroidota</taxon>
        <taxon>Cytophagia</taxon>
        <taxon>Cytophagales</taxon>
        <taxon>Cytophagaceae</taxon>
        <taxon>Cytophaga</taxon>
    </lineage>
</organism>
<proteinExistence type="inferred from homology"/>
<protein>
    <recommendedName>
        <fullName evidence="1">Small ribosomal subunit protein bS21</fullName>
    </recommendedName>
    <alternativeName>
        <fullName evidence="2">30S ribosomal protein S21</fullName>
    </alternativeName>
</protein>
<comment type="similarity">
    <text evidence="1">Belongs to the bacterial ribosomal protein bS21 family.</text>
</comment>
<dbReference type="EMBL" id="CP000383">
    <property type="protein sequence ID" value="ABG60633.1"/>
    <property type="molecule type" value="Genomic_DNA"/>
</dbReference>
<dbReference type="RefSeq" id="WP_011586740.1">
    <property type="nucleotide sequence ID" value="NZ_FPJX01000019.1"/>
</dbReference>
<dbReference type="SMR" id="Q11PN0"/>
<dbReference type="STRING" id="269798.CHU_3397"/>
<dbReference type="KEGG" id="chu:CHU_3397"/>
<dbReference type="eggNOG" id="COG0828">
    <property type="taxonomic scope" value="Bacteria"/>
</dbReference>
<dbReference type="HOGENOM" id="CLU_159258_1_2_10"/>
<dbReference type="OrthoDB" id="598353at2"/>
<dbReference type="Proteomes" id="UP000001822">
    <property type="component" value="Chromosome"/>
</dbReference>
<dbReference type="GO" id="GO:1990904">
    <property type="term" value="C:ribonucleoprotein complex"/>
    <property type="evidence" value="ECO:0007669"/>
    <property type="project" value="UniProtKB-KW"/>
</dbReference>
<dbReference type="GO" id="GO:0005840">
    <property type="term" value="C:ribosome"/>
    <property type="evidence" value="ECO:0007669"/>
    <property type="project" value="UniProtKB-KW"/>
</dbReference>
<dbReference type="GO" id="GO:0003735">
    <property type="term" value="F:structural constituent of ribosome"/>
    <property type="evidence" value="ECO:0007669"/>
    <property type="project" value="InterPro"/>
</dbReference>
<dbReference type="GO" id="GO:0006412">
    <property type="term" value="P:translation"/>
    <property type="evidence" value="ECO:0007669"/>
    <property type="project" value="UniProtKB-UniRule"/>
</dbReference>
<dbReference type="Gene3D" id="1.20.5.1150">
    <property type="entry name" value="Ribosomal protein S8"/>
    <property type="match status" value="1"/>
</dbReference>
<dbReference type="HAMAP" id="MF_00358">
    <property type="entry name" value="Ribosomal_bS21"/>
    <property type="match status" value="1"/>
</dbReference>
<dbReference type="InterPro" id="IPR001911">
    <property type="entry name" value="Ribosomal_bS21"/>
</dbReference>
<dbReference type="InterPro" id="IPR018278">
    <property type="entry name" value="Ribosomal_bS21_CS"/>
</dbReference>
<dbReference type="InterPro" id="IPR038380">
    <property type="entry name" value="Ribosomal_bS21_sf"/>
</dbReference>
<dbReference type="NCBIfam" id="TIGR00030">
    <property type="entry name" value="S21p"/>
    <property type="match status" value="1"/>
</dbReference>
<dbReference type="Pfam" id="PF01165">
    <property type="entry name" value="Ribosomal_S21"/>
    <property type="match status" value="1"/>
</dbReference>
<dbReference type="PRINTS" id="PR00976">
    <property type="entry name" value="RIBOSOMALS21"/>
</dbReference>
<dbReference type="PROSITE" id="PS01181">
    <property type="entry name" value="RIBOSOMAL_S21"/>
    <property type="match status" value="1"/>
</dbReference>
<accession>Q11PN0</accession>
<sequence length="65" mass="7711">MIVINIKENEPIDKALKRFKKKFEKTGVLKALRARSYYEKKSVRLRKEVIRASYRLKLQEAASND</sequence>
<name>RS21_CYTH3</name>
<keyword id="KW-1185">Reference proteome</keyword>
<keyword id="KW-0687">Ribonucleoprotein</keyword>
<keyword id="KW-0689">Ribosomal protein</keyword>
<feature type="chain" id="PRO_0000266660" description="Small ribosomal subunit protein bS21">
    <location>
        <begin position="1"/>
        <end position="65"/>
    </location>
</feature>
<evidence type="ECO:0000255" key="1">
    <source>
        <dbReference type="HAMAP-Rule" id="MF_00358"/>
    </source>
</evidence>
<evidence type="ECO:0000305" key="2"/>
<gene>
    <name evidence="1" type="primary">rpsU</name>
    <name type="ordered locus">CHU_3397</name>
</gene>
<reference key="1">
    <citation type="journal article" date="2007" name="Appl. Environ. Microbiol.">
        <title>Genome sequence of the cellulolytic gliding bacterium Cytophaga hutchinsonii.</title>
        <authorList>
            <person name="Xie G."/>
            <person name="Bruce D.C."/>
            <person name="Challacombe J.F."/>
            <person name="Chertkov O."/>
            <person name="Detter J.C."/>
            <person name="Gilna P."/>
            <person name="Han C.S."/>
            <person name="Lucas S."/>
            <person name="Misra M."/>
            <person name="Myers G.L."/>
            <person name="Richardson P."/>
            <person name="Tapia R."/>
            <person name="Thayer N."/>
            <person name="Thompson L.S."/>
            <person name="Brettin T.S."/>
            <person name="Henrissat B."/>
            <person name="Wilson D.B."/>
            <person name="McBride M.J."/>
        </authorList>
    </citation>
    <scope>NUCLEOTIDE SEQUENCE [LARGE SCALE GENOMIC DNA]</scope>
    <source>
        <strain>ATCC 33406 / DSM 1761 / JCM 20678 / CIP 103989 / IAM 12607 / NBRC 15051 / NCIMB 9469 / D465</strain>
    </source>
</reference>